<keyword id="KW-0997">Cell inner membrane</keyword>
<keyword id="KW-1003">Cell membrane</keyword>
<keyword id="KW-0472">Membrane</keyword>
<keyword id="KW-0812">Transmembrane</keyword>
<keyword id="KW-1133">Transmembrane helix</keyword>
<sequence length="393" mass="43166">MTNSNRIKLTWISFLSYALTGALVIVTGMVMGNIADYFNLPVSSMSNTFTFLNAGILISIFLNAWLMEIVPLKTQLRFGFLLMVLAVAGLMFSHSLALFSAAMFILGVVSGITMSIGTFLVTQMYEGRQRGSRLLFTDSFFSMAGMIFPMIAAFLLARSIEWYWVYACIGLVYVAIFILTFGCEFPALGKHAPKTDAPVEKEKWGIGVLFLSVAALCYILGQLGFISWVPEYAKGLGMSLNDAGTLVSNFWMSYMVGMWAFSFILRFFDLQRILTVLAGLAAILMYVFNTGTPAHMAWSILALGFFSSAIYTTIITLGSQQTKVPSPKLVNFVLTCGTIGTMLTFVVTGPIVEHSGPQAALLTANGLYAVVFVMCFLLGFVSRHRQHNTLTSH</sequence>
<feature type="chain" id="PRO_1000213418" description="Protein TsgA">
    <location>
        <begin position="1"/>
        <end position="393"/>
    </location>
</feature>
<feature type="transmembrane region" description="Helical" evidence="1">
    <location>
        <begin position="11"/>
        <end position="31"/>
    </location>
</feature>
<feature type="transmembrane region" description="Helical" evidence="1">
    <location>
        <begin position="51"/>
        <end position="71"/>
    </location>
</feature>
<feature type="transmembrane region" description="Helical" evidence="1">
    <location>
        <begin position="78"/>
        <end position="98"/>
    </location>
</feature>
<feature type="transmembrane region" description="Helical" evidence="1">
    <location>
        <begin position="101"/>
        <end position="121"/>
    </location>
</feature>
<feature type="transmembrane region" description="Helical" evidence="1">
    <location>
        <begin position="134"/>
        <end position="154"/>
    </location>
</feature>
<feature type="transmembrane region" description="Helical" evidence="1">
    <location>
        <begin position="162"/>
        <end position="182"/>
    </location>
</feature>
<feature type="transmembrane region" description="Helical" evidence="1">
    <location>
        <begin position="206"/>
        <end position="226"/>
    </location>
</feature>
<feature type="transmembrane region" description="Helical" evidence="1">
    <location>
        <begin position="245"/>
        <end position="265"/>
    </location>
</feature>
<feature type="transmembrane region" description="Helical" evidence="1">
    <location>
        <begin position="273"/>
        <end position="293"/>
    </location>
</feature>
<feature type="transmembrane region" description="Helical" evidence="1">
    <location>
        <begin position="297"/>
        <end position="317"/>
    </location>
</feature>
<feature type="transmembrane region" description="Helical" evidence="1">
    <location>
        <begin position="332"/>
        <end position="352"/>
    </location>
</feature>
<feature type="transmembrane region" description="Helical" evidence="1">
    <location>
        <begin position="361"/>
        <end position="381"/>
    </location>
</feature>
<reference key="1">
    <citation type="journal article" date="2009" name="J. Bacteriol.">
        <title>Genomic sequencing reveals regulatory mutations and recombinational events in the widely used MC4100 lineage of Escherichia coli K-12.</title>
        <authorList>
            <person name="Ferenci T."/>
            <person name="Zhou Z."/>
            <person name="Betteridge T."/>
            <person name="Ren Y."/>
            <person name="Liu Y."/>
            <person name="Feng L."/>
            <person name="Reeves P.R."/>
            <person name="Wang L."/>
        </authorList>
    </citation>
    <scope>NUCLEOTIDE SEQUENCE [LARGE SCALE GENOMIC DNA]</scope>
    <source>
        <strain>K12 / MC4100 / BW2952</strain>
    </source>
</reference>
<accession>C4ZUM0</accession>
<dbReference type="EMBL" id="CP001396">
    <property type="protein sequence ID" value="ACR65213.1"/>
    <property type="molecule type" value="Genomic_DNA"/>
</dbReference>
<dbReference type="RefSeq" id="WP_000185247.1">
    <property type="nucleotide sequence ID" value="NC_012759.1"/>
</dbReference>
<dbReference type="SMR" id="C4ZUM0"/>
<dbReference type="GeneID" id="75206308"/>
<dbReference type="KEGG" id="ebw:BWG_3056"/>
<dbReference type="HOGENOM" id="CLU_056916_0_0_6"/>
<dbReference type="GO" id="GO:0005886">
    <property type="term" value="C:plasma membrane"/>
    <property type="evidence" value="ECO:0007669"/>
    <property type="project" value="UniProtKB-SubCell"/>
</dbReference>
<dbReference type="GO" id="GO:0022857">
    <property type="term" value="F:transmembrane transporter activity"/>
    <property type="evidence" value="ECO:0007669"/>
    <property type="project" value="InterPro"/>
</dbReference>
<dbReference type="CDD" id="cd17333">
    <property type="entry name" value="MFS_FucP_MFSD4_like"/>
    <property type="match status" value="1"/>
</dbReference>
<dbReference type="FunFam" id="1.20.1250.20:FF:000032">
    <property type="entry name" value="Protein TsgA"/>
    <property type="match status" value="1"/>
</dbReference>
<dbReference type="FunFam" id="1.20.1250.20:FF:000052">
    <property type="entry name" value="Protein TsgA"/>
    <property type="match status" value="1"/>
</dbReference>
<dbReference type="Gene3D" id="1.20.1250.20">
    <property type="entry name" value="MFS general substrate transporter like domains"/>
    <property type="match status" value="2"/>
</dbReference>
<dbReference type="HAMAP" id="MF_01044">
    <property type="entry name" value="MFS_TsgA"/>
    <property type="match status" value="1"/>
</dbReference>
<dbReference type="InterPro" id="IPR011701">
    <property type="entry name" value="MFS"/>
</dbReference>
<dbReference type="InterPro" id="IPR020846">
    <property type="entry name" value="MFS_dom"/>
</dbReference>
<dbReference type="InterPro" id="IPR036259">
    <property type="entry name" value="MFS_trans_sf"/>
</dbReference>
<dbReference type="InterPro" id="IPR023528">
    <property type="entry name" value="MFS_TsgA"/>
</dbReference>
<dbReference type="InterPro" id="IPR050375">
    <property type="entry name" value="MFS_TsgA-like"/>
</dbReference>
<dbReference type="NCBIfam" id="NF002982">
    <property type="entry name" value="PRK03699.1"/>
    <property type="match status" value="1"/>
</dbReference>
<dbReference type="PANTHER" id="PTHR43702">
    <property type="entry name" value="L-FUCOSE-PROTON SYMPORTER"/>
    <property type="match status" value="1"/>
</dbReference>
<dbReference type="PANTHER" id="PTHR43702:SF3">
    <property type="entry name" value="PROTEIN TSGA"/>
    <property type="match status" value="1"/>
</dbReference>
<dbReference type="Pfam" id="PF07690">
    <property type="entry name" value="MFS_1"/>
    <property type="match status" value="1"/>
</dbReference>
<dbReference type="SUPFAM" id="SSF103473">
    <property type="entry name" value="MFS general substrate transporter"/>
    <property type="match status" value="1"/>
</dbReference>
<dbReference type="PROSITE" id="PS50850">
    <property type="entry name" value="MFS"/>
    <property type="match status" value="1"/>
</dbReference>
<organism>
    <name type="scientific">Escherichia coli (strain K12 / MC4100 / BW2952)</name>
    <dbReference type="NCBI Taxonomy" id="595496"/>
    <lineage>
        <taxon>Bacteria</taxon>
        <taxon>Pseudomonadati</taxon>
        <taxon>Pseudomonadota</taxon>
        <taxon>Gammaproteobacteria</taxon>
        <taxon>Enterobacterales</taxon>
        <taxon>Enterobacteriaceae</taxon>
        <taxon>Escherichia</taxon>
    </lineage>
</organism>
<evidence type="ECO:0000255" key="1">
    <source>
        <dbReference type="HAMAP-Rule" id="MF_01044"/>
    </source>
</evidence>
<protein>
    <recommendedName>
        <fullName evidence="1">Protein TsgA</fullName>
    </recommendedName>
</protein>
<comment type="subcellular location">
    <subcellularLocation>
        <location evidence="1">Cell inner membrane</location>
        <topology evidence="1">Multi-pass membrane protein</topology>
    </subcellularLocation>
</comment>
<comment type="similarity">
    <text evidence="1">Belongs to the major facilitator superfamily. TsgA family.</text>
</comment>
<gene>
    <name evidence="1" type="primary">tsgA</name>
    <name type="ordered locus">BWG_3056</name>
</gene>
<name>TSGA_ECOBW</name>
<proteinExistence type="inferred from homology"/>